<feature type="chain" id="PRO_0000372733" description="UPF0741 protein BCE33L5081">
    <location>
        <begin position="1"/>
        <end position="74"/>
    </location>
</feature>
<dbReference type="EMBL" id="CP000001">
    <property type="protein sequence ID" value="AAU15199.1"/>
    <property type="status" value="ALT_INIT"/>
    <property type="molecule type" value="Genomic_DNA"/>
</dbReference>
<dbReference type="RefSeq" id="WP_000526077.1">
    <property type="nucleotide sequence ID" value="NZ_CP009968.1"/>
</dbReference>
<dbReference type="SMR" id="Q630L7"/>
<dbReference type="KEGG" id="bcz:BCE33L5081"/>
<dbReference type="PATRIC" id="fig|288681.22.peg.261"/>
<dbReference type="Proteomes" id="UP000002612">
    <property type="component" value="Chromosome"/>
</dbReference>
<dbReference type="HAMAP" id="MF_01863">
    <property type="entry name" value="UPF0741"/>
    <property type="match status" value="1"/>
</dbReference>
<dbReference type="InterPro" id="IPR009910">
    <property type="entry name" value="DUF1450"/>
</dbReference>
<dbReference type="InterPro" id="IPR020880">
    <property type="entry name" value="UPF0741"/>
</dbReference>
<dbReference type="Pfam" id="PF07293">
    <property type="entry name" value="DUF1450"/>
    <property type="match status" value="1"/>
</dbReference>
<gene>
    <name type="ordered locus">BCE33L5081</name>
</gene>
<sequence>MGNEFRVCDDCQATNVKTLIPKLKKVDSCATIEVGCQSYCGPGRKKSFAFVNNRPVAAPTEDELIVKIEAKLNK</sequence>
<protein>
    <recommendedName>
        <fullName evidence="1">UPF0741 protein BCE33L5081</fullName>
    </recommendedName>
</protein>
<proteinExistence type="inferred from homology"/>
<evidence type="ECO:0000255" key="1">
    <source>
        <dbReference type="HAMAP-Rule" id="MF_01863"/>
    </source>
</evidence>
<evidence type="ECO:0000305" key="2"/>
<organism>
    <name type="scientific">Bacillus cereus (strain ZK / E33L)</name>
    <dbReference type="NCBI Taxonomy" id="288681"/>
    <lineage>
        <taxon>Bacteria</taxon>
        <taxon>Bacillati</taxon>
        <taxon>Bacillota</taxon>
        <taxon>Bacilli</taxon>
        <taxon>Bacillales</taxon>
        <taxon>Bacillaceae</taxon>
        <taxon>Bacillus</taxon>
        <taxon>Bacillus cereus group</taxon>
    </lineage>
</organism>
<reference key="1">
    <citation type="journal article" date="2006" name="J. Bacteriol.">
        <title>Pathogenomic sequence analysis of Bacillus cereus and Bacillus thuringiensis isolates closely related to Bacillus anthracis.</title>
        <authorList>
            <person name="Han C.S."/>
            <person name="Xie G."/>
            <person name="Challacombe J.F."/>
            <person name="Altherr M.R."/>
            <person name="Bhotika S.S."/>
            <person name="Bruce D."/>
            <person name="Campbell C.S."/>
            <person name="Campbell M.L."/>
            <person name="Chen J."/>
            <person name="Chertkov O."/>
            <person name="Cleland C."/>
            <person name="Dimitrijevic M."/>
            <person name="Doggett N.A."/>
            <person name="Fawcett J.J."/>
            <person name="Glavina T."/>
            <person name="Goodwin L.A."/>
            <person name="Hill K.K."/>
            <person name="Hitchcock P."/>
            <person name="Jackson P.J."/>
            <person name="Keim P."/>
            <person name="Kewalramani A.R."/>
            <person name="Longmire J."/>
            <person name="Lucas S."/>
            <person name="Malfatti S."/>
            <person name="McMurry K."/>
            <person name="Meincke L.J."/>
            <person name="Misra M."/>
            <person name="Moseman B.L."/>
            <person name="Mundt M."/>
            <person name="Munk A.C."/>
            <person name="Okinaka R.T."/>
            <person name="Parson-Quintana B."/>
            <person name="Reilly L.P."/>
            <person name="Richardson P."/>
            <person name="Robinson D.L."/>
            <person name="Rubin E."/>
            <person name="Saunders E."/>
            <person name="Tapia R."/>
            <person name="Tesmer J.G."/>
            <person name="Thayer N."/>
            <person name="Thompson L.S."/>
            <person name="Tice H."/>
            <person name="Ticknor L.O."/>
            <person name="Wills P.L."/>
            <person name="Brettin T.S."/>
            <person name="Gilna P."/>
        </authorList>
    </citation>
    <scope>NUCLEOTIDE SEQUENCE [LARGE SCALE GENOMIC DNA]</scope>
    <source>
        <strain>ZK / E33L</strain>
    </source>
</reference>
<accession>Q630L7</accession>
<name>Y5081_BACCZ</name>
<comment type="similarity">
    <text evidence="1">Belongs to the UPF0741 family.</text>
</comment>
<comment type="sequence caution" evidence="2">
    <conflict type="erroneous initiation">
        <sequence resource="EMBL-CDS" id="AAU15199"/>
    </conflict>
</comment>